<gene>
    <name evidence="1" type="primary">rbsD</name>
    <name type="ordered locus">VFMJ11_1540</name>
</gene>
<accession>B5FEJ4</accession>
<proteinExistence type="inferred from homology"/>
<name>RBSD_ALIFM</name>
<sequence>MKKNTLLNSELSYIIATLGHTDEITICDAGLPIPDASQRIDLALIQGIPTFIDTVKATLAEMQIEGVIVAEEFKTVSPQMHDELMTLIAAEEAQCGKSITVSYIPHEEFKIHTRESKAIVRTGECTPYANVIFQSGVVF</sequence>
<dbReference type="EC" id="5.4.99.62" evidence="1"/>
<dbReference type="EMBL" id="CP001139">
    <property type="protein sequence ID" value="ACH66731.1"/>
    <property type="molecule type" value="Genomic_DNA"/>
</dbReference>
<dbReference type="RefSeq" id="WP_012533941.1">
    <property type="nucleotide sequence ID" value="NC_011184.1"/>
</dbReference>
<dbReference type="SMR" id="B5FEJ4"/>
<dbReference type="KEGG" id="vfm:VFMJ11_1540"/>
<dbReference type="HOGENOM" id="CLU_135498_0_0_6"/>
<dbReference type="UniPathway" id="UPA00916">
    <property type="reaction ID" value="UER00888"/>
</dbReference>
<dbReference type="Proteomes" id="UP000001857">
    <property type="component" value="Chromosome I"/>
</dbReference>
<dbReference type="GO" id="GO:0005829">
    <property type="term" value="C:cytosol"/>
    <property type="evidence" value="ECO:0007669"/>
    <property type="project" value="TreeGrafter"/>
</dbReference>
<dbReference type="GO" id="GO:0062193">
    <property type="term" value="F:D-ribose pyranase activity"/>
    <property type="evidence" value="ECO:0007669"/>
    <property type="project" value="UniProtKB-EC"/>
</dbReference>
<dbReference type="GO" id="GO:0016872">
    <property type="term" value="F:intramolecular lyase activity"/>
    <property type="evidence" value="ECO:0007669"/>
    <property type="project" value="UniProtKB-UniRule"/>
</dbReference>
<dbReference type="GO" id="GO:0048029">
    <property type="term" value="F:monosaccharide binding"/>
    <property type="evidence" value="ECO:0007669"/>
    <property type="project" value="InterPro"/>
</dbReference>
<dbReference type="GO" id="GO:0019303">
    <property type="term" value="P:D-ribose catabolic process"/>
    <property type="evidence" value="ECO:0007669"/>
    <property type="project" value="UniProtKB-UniRule"/>
</dbReference>
<dbReference type="Gene3D" id="3.40.1650.10">
    <property type="entry name" value="RbsD-like domain"/>
    <property type="match status" value="1"/>
</dbReference>
<dbReference type="HAMAP" id="MF_01661">
    <property type="entry name" value="D_rib_pyranase"/>
    <property type="match status" value="1"/>
</dbReference>
<dbReference type="InterPro" id="IPR023064">
    <property type="entry name" value="D-ribose_pyranase"/>
</dbReference>
<dbReference type="InterPro" id="IPR023750">
    <property type="entry name" value="RbsD-like_sf"/>
</dbReference>
<dbReference type="InterPro" id="IPR007721">
    <property type="entry name" value="RbsD_FucU"/>
</dbReference>
<dbReference type="NCBIfam" id="NF008761">
    <property type="entry name" value="PRK11797.1"/>
    <property type="match status" value="1"/>
</dbReference>
<dbReference type="PANTHER" id="PTHR37831">
    <property type="entry name" value="D-RIBOSE PYRANASE"/>
    <property type="match status" value="1"/>
</dbReference>
<dbReference type="PANTHER" id="PTHR37831:SF1">
    <property type="entry name" value="D-RIBOSE PYRANASE"/>
    <property type="match status" value="1"/>
</dbReference>
<dbReference type="Pfam" id="PF05025">
    <property type="entry name" value="RbsD_FucU"/>
    <property type="match status" value="1"/>
</dbReference>
<dbReference type="SUPFAM" id="SSF102546">
    <property type="entry name" value="RbsD-like"/>
    <property type="match status" value="1"/>
</dbReference>
<protein>
    <recommendedName>
        <fullName evidence="1">D-ribose pyranase</fullName>
        <ecNumber evidence="1">5.4.99.62</ecNumber>
    </recommendedName>
</protein>
<feature type="chain" id="PRO_1000187172" description="D-ribose pyranase">
    <location>
        <begin position="1"/>
        <end position="139"/>
    </location>
</feature>
<feature type="active site" description="Proton donor" evidence="1">
    <location>
        <position position="20"/>
    </location>
</feature>
<feature type="binding site" evidence="1">
    <location>
        <position position="28"/>
    </location>
    <ligand>
        <name>substrate</name>
    </ligand>
</feature>
<feature type="binding site" evidence="1">
    <location>
        <position position="106"/>
    </location>
    <ligand>
        <name>substrate</name>
    </ligand>
</feature>
<feature type="binding site" evidence="1">
    <location>
        <begin position="128"/>
        <end position="130"/>
    </location>
    <ligand>
        <name>substrate</name>
    </ligand>
</feature>
<keyword id="KW-0119">Carbohydrate metabolism</keyword>
<keyword id="KW-0963">Cytoplasm</keyword>
<keyword id="KW-0413">Isomerase</keyword>
<organism>
    <name type="scientific">Aliivibrio fischeri (strain MJ11)</name>
    <name type="common">Vibrio fischeri</name>
    <dbReference type="NCBI Taxonomy" id="388396"/>
    <lineage>
        <taxon>Bacteria</taxon>
        <taxon>Pseudomonadati</taxon>
        <taxon>Pseudomonadota</taxon>
        <taxon>Gammaproteobacteria</taxon>
        <taxon>Vibrionales</taxon>
        <taxon>Vibrionaceae</taxon>
        <taxon>Aliivibrio</taxon>
    </lineage>
</organism>
<reference key="1">
    <citation type="submission" date="2008-08" db="EMBL/GenBank/DDBJ databases">
        <title>Complete sequence of Vibrio fischeri strain MJ11.</title>
        <authorList>
            <person name="Mandel M.J."/>
            <person name="Stabb E.V."/>
            <person name="Ruby E.G."/>
            <person name="Ferriera S."/>
            <person name="Johnson J."/>
            <person name="Kravitz S."/>
            <person name="Beeson K."/>
            <person name="Sutton G."/>
            <person name="Rogers Y.-H."/>
            <person name="Friedman R."/>
            <person name="Frazier M."/>
            <person name="Venter J.C."/>
        </authorList>
    </citation>
    <scope>NUCLEOTIDE SEQUENCE [LARGE SCALE GENOMIC DNA]</scope>
    <source>
        <strain>MJ11</strain>
    </source>
</reference>
<evidence type="ECO:0000255" key="1">
    <source>
        <dbReference type="HAMAP-Rule" id="MF_01661"/>
    </source>
</evidence>
<comment type="function">
    <text evidence="1">Catalyzes the interconversion of beta-pyran and beta-furan forms of D-ribose.</text>
</comment>
<comment type="catalytic activity">
    <reaction evidence="1">
        <text>beta-D-ribopyranose = beta-D-ribofuranose</text>
        <dbReference type="Rhea" id="RHEA:25432"/>
        <dbReference type="ChEBI" id="CHEBI:27476"/>
        <dbReference type="ChEBI" id="CHEBI:47002"/>
        <dbReference type="EC" id="5.4.99.62"/>
    </reaction>
</comment>
<comment type="pathway">
    <text evidence="1">Carbohydrate metabolism; D-ribose degradation; D-ribose 5-phosphate from beta-D-ribopyranose: step 1/2.</text>
</comment>
<comment type="subunit">
    <text evidence="1">Homodecamer.</text>
</comment>
<comment type="subcellular location">
    <subcellularLocation>
        <location evidence="1">Cytoplasm</location>
    </subcellularLocation>
</comment>
<comment type="similarity">
    <text evidence="1">Belongs to the RbsD / FucU family. RbsD subfamily.</text>
</comment>